<feature type="chain" id="PRO_0000067770" description="DNA-directed RNA polymerase subunit beta'">
    <location>
        <begin position="1"/>
        <end position="1203"/>
    </location>
</feature>
<feature type="region of interest" description="Disordered" evidence="2">
    <location>
        <begin position="1180"/>
        <end position="1203"/>
    </location>
</feature>
<feature type="compositionally biased region" description="Acidic residues" evidence="2">
    <location>
        <begin position="1190"/>
        <end position="1203"/>
    </location>
</feature>
<feature type="binding site" evidence="1">
    <location>
        <position position="60"/>
    </location>
    <ligand>
        <name>Zn(2+)</name>
        <dbReference type="ChEBI" id="CHEBI:29105"/>
        <label>1</label>
    </ligand>
</feature>
<feature type="binding site" evidence="1">
    <location>
        <position position="62"/>
    </location>
    <ligand>
        <name>Zn(2+)</name>
        <dbReference type="ChEBI" id="CHEBI:29105"/>
        <label>1</label>
    </ligand>
</feature>
<feature type="binding site" evidence="1">
    <location>
        <position position="75"/>
    </location>
    <ligand>
        <name>Zn(2+)</name>
        <dbReference type="ChEBI" id="CHEBI:29105"/>
        <label>1</label>
    </ligand>
</feature>
<feature type="binding site" evidence="1">
    <location>
        <position position="78"/>
    </location>
    <ligand>
        <name>Zn(2+)</name>
        <dbReference type="ChEBI" id="CHEBI:29105"/>
        <label>1</label>
    </ligand>
</feature>
<feature type="binding site" evidence="1">
    <location>
        <position position="449"/>
    </location>
    <ligand>
        <name>Mg(2+)</name>
        <dbReference type="ChEBI" id="CHEBI:18420"/>
    </ligand>
</feature>
<feature type="binding site" evidence="1">
    <location>
        <position position="451"/>
    </location>
    <ligand>
        <name>Mg(2+)</name>
        <dbReference type="ChEBI" id="CHEBI:18420"/>
    </ligand>
</feature>
<feature type="binding site" evidence="1">
    <location>
        <position position="453"/>
    </location>
    <ligand>
        <name>Mg(2+)</name>
        <dbReference type="ChEBI" id="CHEBI:18420"/>
    </ligand>
</feature>
<feature type="binding site" evidence="1">
    <location>
        <position position="818"/>
    </location>
    <ligand>
        <name>Zn(2+)</name>
        <dbReference type="ChEBI" id="CHEBI:29105"/>
        <label>2</label>
    </ligand>
</feature>
<feature type="binding site" evidence="1">
    <location>
        <position position="892"/>
    </location>
    <ligand>
        <name>Zn(2+)</name>
        <dbReference type="ChEBI" id="CHEBI:29105"/>
        <label>2</label>
    </ligand>
</feature>
<feature type="binding site" evidence="1">
    <location>
        <position position="899"/>
    </location>
    <ligand>
        <name>Zn(2+)</name>
        <dbReference type="ChEBI" id="CHEBI:29105"/>
        <label>2</label>
    </ligand>
</feature>
<feature type="binding site" evidence="1">
    <location>
        <position position="902"/>
    </location>
    <ligand>
        <name>Zn(2+)</name>
        <dbReference type="ChEBI" id="CHEBI:29105"/>
        <label>2</label>
    </ligand>
</feature>
<name>RPOC_OCEIH</name>
<gene>
    <name evidence="1" type="primary">rpoC</name>
    <name type="ordered locus">OB0113</name>
</gene>
<keyword id="KW-0240">DNA-directed RNA polymerase</keyword>
<keyword id="KW-0460">Magnesium</keyword>
<keyword id="KW-0479">Metal-binding</keyword>
<keyword id="KW-0548">Nucleotidyltransferase</keyword>
<keyword id="KW-1185">Reference proteome</keyword>
<keyword id="KW-0804">Transcription</keyword>
<keyword id="KW-0808">Transferase</keyword>
<keyword id="KW-0862">Zinc</keyword>
<sequence>MLDVNNFEYMKIGLASPEKIRSWSYGEVKKPETINYRTLKPEKDGLFCERIFGPQKDWECHCGKYKRVRYKGVVCDRCGVEVTKAKVRRERMGHIELAAPVSHIWYFKGIPSRMGLVLDMSPRALEEVIYFAAYIVTDPGSTPLEKKQLLSEKEFRSYYDKYGNTFKAQMGAEAIRKLLQDIDLEKEVDALREELKSAQGQRRTRAIKRLEVMEAFRNSGNESSWMILDVLPVIPPEIRPMVQLDGGRFATSDLNDLYRRVINRNNRLKRLLDLGAPSIIVQNEKRMLQEAVDALIDNGRRGRPVTGPGNRPLKSLSHMLKGKQGRFRQNLLGKRVDYSGRSVIVVGPHLKMYQCGLPREMALELFKPFIMKELVSRGLAHNIKSAKRKIERVHPDVWDVLEDVIKEHPVLLNRAPTLHRLGIQAFEPTLVDGRAIRLHPLVCTAYNADFDGDQMAVHVPLGAEAQAEARILMLAAQNILNPKDGKPVVTPSQDMVLGNYYLTLERENAIGEGSYFKDTNEALIAYQTGYAHLHTRVAVQASSLNNKTFTEEQNNKLLLTTVGKLIFNEILPDSFPYINEPTQLNLEEKTPENYFVDPGTSIKEEIQSRELVKPFKKGFLGDIIAEVFKRFQITETSKMLDRMKDLGFSYSTKAGMTVGISDIVVLAEKQGILDEAQTKVDKVLKQFRRGLITEEERYDRVIAIWSEAKDVIQDKLMGSLSNRNPIFMMSDSGARGNASNFTQLAGMRGLMADPAGKIIEIPIKSSFREGLTVMEYFISTHGARKGLADTALKTADSGYLTRRLVDVAQDVIIREDDCGTDRGLTVSALEEGSEVIEPLIDRLIGRTSFENVKHPETGEVIVEKNELISEDQAKTIVESGIQEVIIRSAFTCNTKHGVCQKCYGRNLATGSDVEVGEAVGIIAAQSIGEPGTQLTMRTFHTGGVAGDDITQGLPRIQELFEARNPKGQAVITEIDGTVLEFKEVKDKQEIVVQGEVEQRSYAVPYNARMKVSIGDTVEAGQELTEGSVDPKELLQIKGVEGVQDYLLKEVQRVYRMQGVEIGDKHVEVMVRQMLRKIRVVSSGDTEVLPGSLLELHQFKEANHKVLMEEGEPATGRPVLLGITKASLETDSFLSAASFQETTRVLTDAAIKGKRDELLGLKENVIIGKLVPAGTGMPQYRNLESGLDMPESAEESSEEETQTV</sequence>
<accession>Q8ETY7</accession>
<organism>
    <name type="scientific">Oceanobacillus iheyensis (strain DSM 14371 / CIP 107618 / JCM 11309 / KCTC 3954 / HTE831)</name>
    <dbReference type="NCBI Taxonomy" id="221109"/>
    <lineage>
        <taxon>Bacteria</taxon>
        <taxon>Bacillati</taxon>
        <taxon>Bacillota</taxon>
        <taxon>Bacilli</taxon>
        <taxon>Bacillales</taxon>
        <taxon>Bacillaceae</taxon>
        <taxon>Oceanobacillus</taxon>
    </lineage>
</organism>
<comment type="function">
    <text evidence="1">DNA-dependent RNA polymerase catalyzes the transcription of DNA into RNA using the four ribonucleoside triphosphates as substrates.</text>
</comment>
<comment type="catalytic activity">
    <reaction evidence="1">
        <text>RNA(n) + a ribonucleoside 5'-triphosphate = RNA(n+1) + diphosphate</text>
        <dbReference type="Rhea" id="RHEA:21248"/>
        <dbReference type="Rhea" id="RHEA-COMP:14527"/>
        <dbReference type="Rhea" id="RHEA-COMP:17342"/>
        <dbReference type="ChEBI" id="CHEBI:33019"/>
        <dbReference type="ChEBI" id="CHEBI:61557"/>
        <dbReference type="ChEBI" id="CHEBI:140395"/>
        <dbReference type="EC" id="2.7.7.6"/>
    </reaction>
</comment>
<comment type="cofactor">
    <cofactor evidence="1">
        <name>Mg(2+)</name>
        <dbReference type="ChEBI" id="CHEBI:18420"/>
    </cofactor>
    <text evidence="1">Binds 1 Mg(2+) ion per subunit.</text>
</comment>
<comment type="cofactor">
    <cofactor evidence="1">
        <name>Zn(2+)</name>
        <dbReference type="ChEBI" id="CHEBI:29105"/>
    </cofactor>
    <text evidence="1">Binds 2 Zn(2+) ions per subunit.</text>
</comment>
<comment type="subunit">
    <text evidence="1">The RNAP catalytic core consists of 2 alpha, 1 beta, 1 beta' and 1 omega subunit. When a sigma factor is associated with the core the holoenzyme is formed, which can initiate transcription.</text>
</comment>
<comment type="similarity">
    <text evidence="1">Belongs to the RNA polymerase beta' chain family.</text>
</comment>
<evidence type="ECO:0000255" key="1">
    <source>
        <dbReference type="HAMAP-Rule" id="MF_01322"/>
    </source>
</evidence>
<evidence type="ECO:0000256" key="2">
    <source>
        <dbReference type="SAM" id="MobiDB-lite"/>
    </source>
</evidence>
<proteinExistence type="inferred from homology"/>
<protein>
    <recommendedName>
        <fullName evidence="1">DNA-directed RNA polymerase subunit beta'</fullName>
        <shortName evidence="1">RNAP subunit beta'</shortName>
        <ecNumber evidence="1">2.7.7.6</ecNumber>
    </recommendedName>
    <alternativeName>
        <fullName evidence="1">RNA polymerase subunit beta'</fullName>
    </alternativeName>
    <alternativeName>
        <fullName evidence="1">Transcriptase subunit beta'</fullName>
    </alternativeName>
</protein>
<reference key="1">
    <citation type="journal article" date="2002" name="Nucleic Acids Res.">
        <title>Genome sequence of Oceanobacillus iheyensis isolated from the Iheya Ridge and its unexpected adaptive capabilities to extreme environments.</title>
        <authorList>
            <person name="Takami H."/>
            <person name="Takaki Y."/>
            <person name="Uchiyama I."/>
        </authorList>
    </citation>
    <scope>NUCLEOTIDE SEQUENCE [LARGE SCALE GENOMIC DNA]</scope>
    <source>
        <strain>DSM 14371 / CIP 107618 / JCM 11309 / KCTC 3954 / HTE831</strain>
    </source>
</reference>
<dbReference type="EC" id="2.7.7.6" evidence="1"/>
<dbReference type="EMBL" id="BA000028">
    <property type="protein sequence ID" value="BAC12069.1"/>
    <property type="molecule type" value="Genomic_DNA"/>
</dbReference>
<dbReference type="RefSeq" id="WP_011064516.1">
    <property type="nucleotide sequence ID" value="NC_004193.1"/>
</dbReference>
<dbReference type="SMR" id="Q8ETY7"/>
<dbReference type="STRING" id="221109.gene:10732303"/>
<dbReference type="KEGG" id="oih:OB0113"/>
<dbReference type="eggNOG" id="COG0086">
    <property type="taxonomic scope" value="Bacteria"/>
</dbReference>
<dbReference type="HOGENOM" id="CLU_000524_3_1_9"/>
<dbReference type="OrthoDB" id="9815296at2"/>
<dbReference type="PhylomeDB" id="Q8ETY7"/>
<dbReference type="Proteomes" id="UP000000822">
    <property type="component" value="Chromosome"/>
</dbReference>
<dbReference type="GO" id="GO:0000428">
    <property type="term" value="C:DNA-directed RNA polymerase complex"/>
    <property type="evidence" value="ECO:0007669"/>
    <property type="project" value="UniProtKB-KW"/>
</dbReference>
<dbReference type="GO" id="GO:0003677">
    <property type="term" value="F:DNA binding"/>
    <property type="evidence" value="ECO:0007669"/>
    <property type="project" value="UniProtKB-UniRule"/>
</dbReference>
<dbReference type="GO" id="GO:0003899">
    <property type="term" value="F:DNA-directed RNA polymerase activity"/>
    <property type="evidence" value="ECO:0007669"/>
    <property type="project" value="UniProtKB-UniRule"/>
</dbReference>
<dbReference type="GO" id="GO:0000287">
    <property type="term" value="F:magnesium ion binding"/>
    <property type="evidence" value="ECO:0007669"/>
    <property type="project" value="UniProtKB-UniRule"/>
</dbReference>
<dbReference type="GO" id="GO:0008270">
    <property type="term" value="F:zinc ion binding"/>
    <property type="evidence" value="ECO:0007669"/>
    <property type="project" value="UniProtKB-UniRule"/>
</dbReference>
<dbReference type="GO" id="GO:0006351">
    <property type="term" value="P:DNA-templated transcription"/>
    <property type="evidence" value="ECO:0007669"/>
    <property type="project" value="UniProtKB-UniRule"/>
</dbReference>
<dbReference type="CDD" id="cd02655">
    <property type="entry name" value="RNAP_beta'_C"/>
    <property type="match status" value="1"/>
</dbReference>
<dbReference type="CDD" id="cd01609">
    <property type="entry name" value="RNAP_beta'_N"/>
    <property type="match status" value="1"/>
</dbReference>
<dbReference type="FunFam" id="1.10.150.390:FF:000002">
    <property type="entry name" value="DNA-directed RNA polymerase subunit beta"/>
    <property type="match status" value="1"/>
</dbReference>
<dbReference type="FunFam" id="4.10.860.120:FF:000001">
    <property type="entry name" value="DNA-directed RNA polymerase subunit beta"/>
    <property type="match status" value="1"/>
</dbReference>
<dbReference type="Gene3D" id="1.10.132.30">
    <property type="match status" value="1"/>
</dbReference>
<dbReference type="Gene3D" id="1.10.150.390">
    <property type="match status" value="1"/>
</dbReference>
<dbReference type="Gene3D" id="1.10.1790.20">
    <property type="match status" value="1"/>
</dbReference>
<dbReference type="Gene3D" id="1.10.40.90">
    <property type="match status" value="1"/>
</dbReference>
<dbReference type="Gene3D" id="2.40.40.20">
    <property type="match status" value="1"/>
</dbReference>
<dbReference type="Gene3D" id="2.40.50.100">
    <property type="match status" value="1"/>
</dbReference>
<dbReference type="Gene3D" id="4.10.860.120">
    <property type="entry name" value="RNA polymerase II, clamp domain"/>
    <property type="match status" value="1"/>
</dbReference>
<dbReference type="Gene3D" id="1.10.274.100">
    <property type="entry name" value="RNA polymerase Rpb1, domain 3"/>
    <property type="match status" value="1"/>
</dbReference>
<dbReference type="HAMAP" id="MF_01322">
    <property type="entry name" value="RNApol_bact_RpoC"/>
    <property type="match status" value="1"/>
</dbReference>
<dbReference type="InterPro" id="IPR045867">
    <property type="entry name" value="DNA-dir_RpoC_beta_prime"/>
</dbReference>
<dbReference type="InterPro" id="IPR012754">
    <property type="entry name" value="DNA-dir_RpoC_beta_prime_bact"/>
</dbReference>
<dbReference type="InterPro" id="IPR000722">
    <property type="entry name" value="RNA_pol_asu"/>
</dbReference>
<dbReference type="InterPro" id="IPR006592">
    <property type="entry name" value="RNA_pol_N"/>
</dbReference>
<dbReference type="InterPro" id="IPR007080">
    <property type="entry name" value="RNA_pol_Rpb1_1"/>
</dbReference>
<dbReference type="InterPro" id="IPR007066">
    <property type="entry name" value="RNA_pol_Rpb1_3"/>
</dbReference>
<dbReference type="InterPro" id="IPR042102">
    <property type="entry name" value="RNA_pol_Rpb1_3_sf"/>
</dbReference>
<dbReference type="InterPro" id="IPR007083">
    <property type="entry name" value="RNA_pol_Rpb1_4"/>
</dbReference>
<dbReference type="InterPro" id="IPR007081">
    <property type="entry name" value="RNA_pol_Rpb1_5"/>
</dbReference>
<dbReference type="InterPro" id="IPR044893">
    <property type="entry name" value="RNA_pol_Rpb1_clamp_domain"/>
</dbReference>
<dbReference type="InterPro" id="IPR038120">
    <property type="entry name" value="Rpb1_funnel_sf"/>
</dbReference>
<dbReference type="NCBIfam" id="TIGR02386">
    <property type="entry name" value="rpoC_TIGR"/>
    <property type="match status" value="1"/>
</dbReference>
<dbReference type="PANTHER" id="PTHR19376">
    <property type="entry name" value="DNA-DIRECTED RNA POLYMERASE"/>
    <property type="match status" value="1"/>
</dbReference>
<dbReference type="PANTHER" id="PTHR19376:SF54">
    <property type="entry name" value="DNA-DIRECTED RNA POLYMERASE SUBUNIT BETA"/>
    <property type="match status" value="1"/>
</dbReference>
<dbReference type="Pfam" id="PF04997">
    <property type="entry name" value="RNA_pol_Rpb1_1"/>
    <property type="match status" value="1"/>
</dbReference>
<dbReference type="Pfam" id="PF00623">
    <property type="entry name" value="RNA_pol_Rpb1_2"/>
    <property type="match status" value="2"/>
</dbReference>
<dbReference type="Pfam" id="PF04983">
    <property type="entry name" value="RNA_pol_Rpb1_3"/>
    <property type="match status" value="1"/>
</dbReference>
<dbReference type="Pfam" id="PF05000">
    <property type="entry name" value="RNA_pol_Rpb1_4"/>
    <property type="match status" value="1"/>
</dbReference>
<dbReference type="Pfam" id="PF04998">
    <property type="entry name" value="RNA_pol_Rpb1_5"/>
    <property type="match status" value="1"/>
</dbReference>
<dbReference type="SMART" id="SM00663">
    <property type="entry name" value="RPOLA_N"/>
    <property type="match status" value="1"/>
</dbReference>
<dbReference type="SUPFAM" id="SSF64484">
    <property type="entry name" value="beta and beta-prime subunits of DNA dependent RNA-polymerase"/>
    <property type="match status" value="1"/>
</dbReference>